<reference key="1">
    <citation type="journal article" date="2003" name="Science">
        <title>A C. elegans CLIC-like protein required for intracellular tube formation and maintenance.</title>
        <authorList>
            <person name="Berry K.L."/>
            <person name="Buelow H.E."/>
            <person name="Hall D.H."/>
            <person name="Hobert O."/>
        </authorList>
    </citation>
    <scope>NUCLEOTIDE SEQUENCE [MRNA]</scope>
    <scope>SUBCELLULAR LOCATION</scope>
    <scope>TISSUE SPECIFICITY</scope>
    <scope>DOMAIN</scope>
    <scope>MUTAGENESIS OF LEU-46 AND PRO-238</scope>
    <source>
        <strain>Bristol N2</strain>
    </source>
</reference>
<reference key="2">
    <citation type="journal article" date="1998" name="Science">
        <title>Genome sequence of the nematode C. elegans: a platform for investigating biology.</title>
        <authorList>
            <consortium name="The C. elegans sequencing consortium"/>
        </authorList>
    </citation>
    <scope>NUCLEOTIDE SEQUENCE [LARGE SCALE GENOMIC DNA]</scope>
    <source>
        <strain>Bristol N2</strain>
    </source>
</reference>
<reference key="3">
    <citation type="journal article" date="2008" name="Proteins">
        <title>Comparison of vertebrate and invertebrate CLIC proteins: the crystal structures of Caenorhabditis elegans EXC-4 and Drosophila melanogaster DmCLIC.</title>
        <authorList>
            <person name="Littler D.R."/>
            <person name="Harrop S.J."/>
            <person name="Brown L.J."/>
            <person name="Pankhurst G.J."/>
            <person name="Mynott A.V."/>
            <person name="Luciani P."/>
            <person name="Mandyam R.A."/>
            <person name="Mazzanti M."/>
            <person name="Tanda S."/>
            <person name="Berryman M.A."/>
            <person name="Breit S.N."/>
            <person name="Curmi P.M.G."/>
        </authorList>
    </citation>
    <scope>X-RAY CRYSTALLOGRAPHY (1.6 ANGSTROMS)</scope>
    <scope>FUNCTION</scope>
    <scope>SUBCELLULAR LOCATION</scope>
    <scope>SUBUNIT</scope>
</reference>
<evidence type="ECO:0000250" key="1"/>
<evidence type="ECO:0000255" key="2"/>
<evidence type="ECO:0000269" key="3">
    <source>
    </source>
</evidence>
<evidence type="ECO:0000269" key="4">
    <source>
    </source>
</evidence>
<evidence type="ECO:0000305" key="5"/>
<evidence type="ECO:0000305" key="6">
    <source>
    </source>
</evidence>
<evidence type="ECO:0007829" key="7">
    <source>
        <dbReference type="PDB" id="2YV9"/>
    </source>
</evidence>
<feature type="chain" id="PRO_0000144221" description="Chloride intracellular channel exc-4">
    <location>
        <begin position="1"/>
        <end position="290"/>
    </location>
</feature>
<feature type="transmembrane region" description="Helical; Note=After insertion into the membrane" evidence="2">
    <location>
        <begin position="37"/>
        <end position="57"/>
    </location>
</feature>
<feature type="mutagenesis site" description="Abolishes membrane localization." evidence="3">
    <original>L</original>
    <variation>P</variation>
    <location>
        <position position="46"/>
    </location>
</feature>
<feature type="mutagenesis site" description="In n2400; induces defects in tubular morphology of the excretory canal." evidence="3">
    <original>P</original>
    <variation>L</variation>
    <location>
        <position position="238"/>
    </location>
</feature>
<feature type="helix" evidence="7">
    <location>
        <begin position="1"/>
        <end position="4"/>
    </location>
</feature>
<feature type="helix" evidence="7">
    <location>
        <begin position="13"/>
        <end position="15"/>
    </location>
</feature>
<feature type="strand" evidence="7">
    <location>
        <begin position="18"/>
        <end position="25"/>
    </location>
</feature>
<feature type="helix" evidence="7">
    <location>
        <begin position="37"/>
        <end position="51"/>
    </location>
</feature>
<feature type="strand" evidence="7">
    <location>
        <begin position="56"/>
        <end position="62"/>
    </location>
</feature>
<feature type="helix" evidence="7">
    <location>
        <begin position="67"/>
        <end position="73"/>
    </location>
</feature>
<feature type="strand" evidence="7">
    <location>
        <begin position="80"/>
        <end position="83"/>
    </location>
</feature>
<feature type="helix" evidence="7">
    <location>
        <begin position="84"/>
        <end position="86"/>
    </location>
</feature>
<feature type="strand" evidence="7">
    <location>
        <begin position="88"/>
        <end position="90"/>
    </location>
</feature>
<feature type="helix" evidence="7">
    <location>
        <begin position="93"/>
        <end position="106"/>
    </location>
</feature>
<feature type="helix" evidence="7">
    <location>
        <begin position="116"/>
        <end position="139"/>
    </location>
</feature>
<feature type="turn" evidence="7">
    <location>
        <begin position="140"/>
        <end position="142"/>
    </location>
</feature>
<feature type="helix" evidence="7">
    <location>
        <begin position="149"/>
        <end position="151"/>
    </location>
</feature>
<feature type="helix" evidence="7">
    <location>
        <begin position="154"/>
        <end position="177"/>
    </location>
</feature>
<feature type="strand" evidence="7">
    <location>
        <begin position="180"/>
        <end position="186"/>
    </location>
</feature>
<feature type="helix" evidence="7">
    <location>
        <begin position="189"/>
        <end position="207"/>
    </location>
</feature>
<feature type="helix" evidence="7">
    <location>
        <begin position="218"/>
        <end position="227"/>
    </location>
</feature>
<feature type="helix" evidence="7">
    <location>
        <begin position="231"/>
        <end position="235"/>
    </location>
</feature>
<feature type="helix" evidence="7">
    <location>
        <begin position="240"/>
        <end position="250"/>
    </location>
</feature>
<feature type="helix" evidence="7">
    <location>
        <begin position="257"/>
        <end position="261"/>
    </location>
</feature>
<feature type="helix" evidence="7">
    <location>
        <begin position="272"/>
        <end position="279"/>
    </location>
</feature>
<feature type="turn" evidence="7">
    <location>
        <begin position="280"/>
        <end position="282"/>
    </location>
</feature>
<name>EXC4_CAEEL</name>
<gene>
    <name type="primary">exc-4</name>
    <name type="ORF">Y105E8A.22</name>
</gene>
<sequence length="290" mass="33703">MAEAYQIQSNGDPQSKPLLELYVKASGIDARRIGADLFCQEFWMELYALYEIGVARVEVKTVNVNSEAFKKNFLGAQPPIMIEEEKELTYTDNREIEGRIFHLAKEFNVPLFEKDPSAEKRIENLYRNFKLFLRAKVEFDKGKKEPSRVEDLPAQIKVHYNRVCEQLSNIDQLLSERKSRYLLGNSMTEYDCELMPRLHHIRIIGLSLLGFDIPHNFTHLWAYILTAYRTAAFIESCPADQDIIHHYKEQMNLFTNQRETLQSPTKTHTIPEKVLSDIRVKGLAPDVNVH</sequence>
<dbReference type="EMBL" id="AY308063">
    <property type="protein sequence ID" value="AAQ75554.1"/>
    <property type="molecule type" value="mRNA"/>
</dbReference>
<dbReference type="EMBL" id="AL132876">
    <property type="protein sequence ID" value="CAD21669.2"/>
    <property type="molecule type" value="Genomic_DNA"/>
</dbReference>
<dbReference type="RefSeq" id="NP_740950.2">
    <property type="nucleotide sequence ID" value="NM_170954.3"/>
</dbReference>
<dbReference type="PDB" id="2YV9">
    <property type="method" value="X-ray"/>
    <property type="resolution" value="1.60 A"/>
    <property type="chains" value="A/B=1-290"/>
</dbReference>
<dbReference type="PDBsum" id="2YV9"/>
<dbReference type="SMR" id="Q8WQA4"/>
<dbReference type="BioGRID" id="38700">
    <property type="interactions" value="16"/>
</dbReference>
<dbReference type="FunCoup" id="Q8WQA4">
    <property type="interactions" value="867"/>
</dbReference>
<dbReference type="STRING" id="6239.Y105E8A.22.1"/>
<dbReference type="PaxDb" id="6239-Y105E8A.22"/>
<dbReference type="PeptideAtlas" id="Q8WQA4"/>
<dbReference type="EnsemblMetazoa" id="Y105E8A.22.1">
    <property type="protein sequence ID" value="Y105E8A.22.1"/>
    <property type="gene ID" value="WBGene00001365"/>
</dbReference>
<dbReference type="GeneID" id="173314"/>
<dbReference type="KEGG" id="cel:CELE_Y105E8A.22"/>
<dbReference type="UCSC" id="Y105E8A.22">
    <property type="organism name" value="c. elegans"/>
</dbReference>
<dbReference type="AGR" id="WB:WBGene00001365"/>
<dbReference type="CTD" id="173314"/>
<dbReference type="WormBase" id="Y105E8A.22">
    <property type="protein sequence ID" value="CE36222"/>
    <property type="gene ID" value="WBGene00001365"/>
    <property type="gene designation" value="exc-4"/>
</dbReference>
<dbReference type="eggNOG" id="KOG1422">
    <property type="taxonomic scope" value="Eukaryota"/>
</dbReference>
<dbReference type="GeneTree" id="ENSGT00940000173425"/>
<dbReference type="HOGENOM" id="CLU_061051_0_0_1"/>
<dbReference type="InParanoid" id="Q8WQA4"/>
<dbReference type="OMA" id="IHHYKEQ"/>
<dbReference type="OrthoDB" id="1935530at2759"/>
<dbReference type="PhylomeDB" id="Q8WQA4"/>
<dbReference type="EvolutionaryTrace" id="Q8WQA4"/>
<dbReference type="PRO" id="PR:Q8WQA4"/>
<dbReference type="Proteomes" id="UP000001940">
    <property type="component" value="Chromosome I"/>
</dbReference>
<dbReference type="Bgee" id="WBGene00001365">
    <property type="expression patterns" value="Expressed in embryo and 3 other cell types or tissues"/>
</dbReference>
<dbReference type="GO" id="GO:0043296">
    <property type="term" value="C:apical junction complex"/>
    <property type="evidence" value="ECO:0000314"/>
    <property type="project" value="WormBase"/>
</dbReference>
<dbReference type="GO" id="GO:0016324">
    <property type="term" value="C:apical plasma membrane"/>
    <property type="evidence" value="ECO:0000314"/>
    <property type="project" value="WormBase"/>
</dbReference>
<dbReference type="GO" id="GO:0034707">
    <property type="term" value="C:chloride channel complex"/>
    <property type="evidence" value="ECO:0007669"/>
    <property type="project" value="UniProtKB-KW"/>
</dbReference>
<dbReference type="GO" id="GO:0005737">
    <property type="term" value="C:cytoplasm"/>
    <property type="evidence" value="ECO:0000318"/>
    <property type="project" value="GO_Central"/>
</dbReference>
<dbReference type="GO" id="GO:0005764">
    <property type="term" value="C:lysosome"/>
    <property type="evidence" value="ECO:0000314"/>
    <property type="project" value="WormBase"/>
</dbReference>
<dbReference type="GO" id="GO:0005886">
    <property type="term" value="C:plasma membrane"/>
    <property type="evidence" value="ECO:0000314"/>
    <property type="project" value="WormBase"/>
</dbReference>
<dbReference type="GO" id="GO:0005254">
    <property type="term" value="F:chloride channel activity"/>
    <property type="evidence" value="ECO:0000318"/>
    <property type="project" value="GO_Central"/>
</dbReference>
<dbReference type="GO" id="GO:0006821">
    <property type="term" value="P:chloride transport"/>
    <property type="evidence" value="ECO:0000318"/>
    <property type="project" value="GO_Central"/>
</dbReference>
<dbReference type="GO" id="GO:0002064">
    <property type="term" value="P:epithelial cell development"/>
    <property type="evidence" value="ECO:0000315"/>
    <property type="project" value="WormBase"/>
</dbReference>
<dbReference type="GO" id="GO:0035150">
    <property type="term" value="P:regulation of tube size"/>
    <property type="evidence" value="ECO:0000315"/>
    <property type="project" value="WormBase"/>
</dbReference>
<dbReference type="CDD" id="cd03198">
    <property type="entry name" value="GST_C_CLIC"/>
    <property type="match status" value="1"/>
</dbReference>
<dbReference type="CDD" id="cd03061">
    <property type="entry name" value="GST_N_CLIC"/>
    <property type="match status" value="1"/>
</dbReference>
<dbReference type="FunFam" id="3.40.30.10:FF:000418">
    <property type="entry name" value="Chloride intracellular channel exc-4"/>
    <property type="match status" value="1"/>
</dbReference>
<dbReference type="FunFam" id="1.20.1050.10:FF:000040">
    <property type="entry name" value="chloride intracellular channel exc-4"/>
    <property type="match status" value="1"/>
</dbReference>
<dbReference type="Gene3D" id="1.20.1050.10">
    <property type="match status" value="1"/>
</dbReference>
<dbReference type="Gene3D" id="3.40.30.10">
    <property type="entry name" value="Glutaredoxin"/>
    <property type="match status" value="1"/>
</dbReference>
<dbReference type="InterPro" id="IPR053823">
    <property type="entry name" value="CLIC_N"/>
</dbReference>
<dbReference type="InterPro" id="IPR036282">
    <property type="entry name" value="Glutathione-S-Trfase_C_sf"/>
</dbReference>
<dbReference type="PANTHER" id="PTHR43920:SF5">
    <property type="entry name" value="CHLORIDE INTRACELLULAR CHANNEL CLIC"/>
    <property type="match status" value="1"/>
</dbReference>
<dbReference type="PANTHER" id="PTHR43920">
    <property type="entry name" value="CHLORIDE INTRACELLULAR CHANNEL, ISOFORM A"/>
    <property type="match status" value="1"/>
</dbReference>
<dbReference type="Pfam" id="PF22441">
    <property type="entry name" value="CLIC-like_N"/>
    <property type="match status" value="1"/>
</dbReference>
<dbReference type="SUPFAM" id="SSF47616">
    <property type="entry name" value="GST C-terminal domain-like"/>
    <property type="match status" value="1"/>
</dbReference>
<proteinExistence type="evidence at protein level"/>
<protein>
    <recommendedName>
        <fullName>Chloride intracellular channel exc-4</fullName>
    </recommendedName>
    <alternativeName>
        <fullName>Excretory canal abnormal protein 4</fullName>
    </alternativeName>
</protein>
<organism>
    <name type="scientific">Caenorhabditis elegans</name>
    <dbReference type="NCBI Taxonomy" id="6239"/>
    <lineage>
        <taxon>Eukaryota</taxon>
        <taxon>Metazoa</taxon>
        <taxon>Ecdysozoa</taxon>
        <taxon>Nematoda</taxon>
        <taxon>Chromadorea</taxon>
        <taxon>Rhabditida</taxon>
        <taxon>Rhabditina</taxon>
        <taxon>Rhabditomorpha</taxon>
        <taxon>Rhabditoidea</taxon>
        <taxon>Rhabditidae</taxon>
        <taxon>Peloderinae</taxon>
        <taxon>Caenorhabditis</taxon>
    </lineage>
</organism>
<comment type="function">
    <text evidence="4">May insert into membranes and form chloride ion channels. Involved in the formation of the excretory canal. Required to prevent cystic lumenal expansions in the excretory cell. Not required for formation of the initial tube, but is required for regulating the size of the tube lumen as it grows.</text>
</comment>
<comment type="subunit">
    <text evidence="4">Monomer.</text>
</comment>
<comment type="subcellular location">
    <subcellularLocation>
        <location>Cytoplasm</location>
    </subcellularLocation>
    <subcellularLocation>
        <location evidence="5">Membrane</location>
        <topology evidence="5">Single-pass membrane protein</topology>
    </subcellularLocation>
    <text>Exists both as soluble cytoplasmic protein and as membrane protein with probably a single transmembrane domain. Localizes to various tubular membranes in distinct cell types, including the lumenal membrane of the excretory tubes.</text>
</comment>
<comment type="tissue specificity">
    <text evidence="3">Expressed in the secretory system, hypodermis, vulva, pharyngeal muscle, rectal gland, tubular rectal epithelium cells, and tubular neuronal support cells in the head and tail.</text>
</comment>
<comment type="domain">
    <text evidence="3">The N-terminal part (1-55) is necessary and sufficient for translocation from the cytosol to the membrane.</text>
</comment>
<comment type="domain">
    <text evidence="1">Members of this family may change from a globular, soluble state to a state where the N-terminal domain is inserted into the membrane and functions as a chloride channel. A conformation change of the N-terminal domain is thought to expose hydrophobic surfaces that trigger membrane insertion (By similarity).</text>
</comment>
<comment type="similarity">
    <text evidence="5">Belongs to the chloride channel CLIC family.</text>
</comment>
<comment type="caution">
    <text evidence="6">The structure contains a calcium molecule but it is unclear if this is an artifact of the crystallization process or if it has a physiological role in the activity regulation/formation of the channel.</text>
</comment>
<keyword id="KW-0002">3D-structure</keyword>
<keyword id="KW-0868">Chloride</keyword>
<keyword id="KW-0869">Chloride channel</keyword>
<keyword id="KW-0963">Cytoplasm</keyword>
<keyword id="KW-0407">Ion channel</keyword>
<keyword id="KW-0406">Ion transport</keyword>
<keyword id="KW-0472">Membrane</keyword>
<keyword id="KW-1185">Reference proteome</keyword>
<keyword id="KW-0812">Transmembrane</keyword>
<keyword id="KW-1133">Transmembrane helix</keyword>
<keyword id="KW-0813">Transport</keyword>
<keyword id="KW-0851">Voltage-gated channel</keyword>
<accession>Q8WQA4</accession>